<accession>B3LHQ7</accession>
<gene>
    <name evidence="1" type="primary">NCS6</name>
    <name evidence="1" type="synonym">CTU1</name>
    <name evidence="1" type="synonym">TUC1</name>
    <name type="ORF">SCRG_01198</name>
</gene>
<dbReference type="EC" id="2.7.7.-" evidence="1"/>
<dbReference type="EMBL" id="CH408044">
    <property type="protein sequence ID" value="EDV10415.1"/>
    <property type="molecule type" value="Genomic_DNA"/>
</dbReference>
<dbReference type="SMR" id="B3LHQ7"/>
<dbReference type="HOGENOM" id="CLU_026481_1_0_1"/>
<dbReference type="OrthoDB" id="14983at4893"/>
<dbReference type="UniPathway" id="UPA00988"/>
<dbReference type="Proteomes" id="UP000008335">
    <property type="component" value="Unassembled WGS sequence"/>
</dbReference>
<dbReference type="GO" id="GO:0005829">
    <property type="term" value="C:cytosol"/>
    <property type="evidence" value="ECO:0000250"/>
    <property type="project" value="UniProtKB"/>
</dbReference>
<dbReference type="GO" id="GO:0002144">
    <property type="term" value="C:cytosolic tRNA wobble base thiouridylase complex"/>
    <property type="evidence" value="ECO:0007669"/>
    <property type="project" value="TreeGrafter"/>
</dbReference>
<dbReference type="GO" id="GO:0005739">
    <property type="term" value="C:mitochondrion"/>
    <property type="evidence" value="ECO:0007669"/>
    <property type="project" value="UniProtKB-SubCell"/>
</dbReference>
<dbReference type="GO" id="GO:0016779">
    <property type="term" value="F:nucleotidyltransferase activity"/>
    <property type="evidence" value="ECO:0007669"/>
    <property type="project" value="UniProtKB-UniRule"/>
</dbReference>
<dbReference type="GO" id="GO:0000049">
    <property type="term" value="F:tRNA binding"/>
    <property type="evidence" value="ECO:0000250"/>
    <property type="project" value="UniProtKB"/>
</dbReference>
<dbReference type="GO" id="GO:0032447">
    <property type="term" value="P:protein urmylation"/>
    <property type="evidence" value="ECO:0007669"/>
    <property type="project" value="UniProtKB-UniRule"/>
</dbReference>
<dbReference type="GO" id="GO:0034227">
    <property type="term" value="P:tRNA thio-modification"/>
    <property type="evidence" value="ECO:0000250"/>
    <property type="project" value="UniProtKB"/>
</dbReference>
<dbReference type="GO" id="GO:0002143">
    <property type="term" value="P:tRNA wobble position uridine thiolation"/>
    <property type="evidence" value="ECO:0007669"/>
    <property type="project" value="TreeGrafter"/>
</dbReference>
<dbReference type="GO" id="GO:0002098">
    <property type="term" value="P:tRNA wobble uridine modification"/>
    <property type="evidence" value="ECO:0000250"/>
    <property type="project" value="UniProtKB"/>
</dbReference>
<dbReference type="CDD" id="cd01713">
    <property type="entry name" value="CTU1-like"/>
    <property type="match status" value="1"/>
</dbReference>
<dbReference type="FunFam" id="3.40.50.620:FF:000188">
    <property type="entry name" value="Cytoplasmic tRNA 2-thiolation protein 1"/>
    <property type="match status" value="1"/>
</dbReference>
<dbReference type="Gene3D" id="3.40.50.620">
    <property type="entry name" value="HUPs"/>
    <property type="match status" value="1"/>
</dbReference>
<dbReference type="HAMAP" id="MF_03053">
    <property type="entry name" value="CTU1"/>
    <property type="match status" value="1"/>
</dbReference>
<dbReference type="InterPro" id="IPR056369">
    <property type="entry name" value="CTU1-like_ATP-bd"/>
</dbReference>
<dbReference type="InterPro" id="IPR032442">
    <property type="entry name" value="CTU1_C"/>
</dbReference>
<dbReference type="InterPro" id="IPR000541">
    <property type="entry name" value="Ncs6/Tuc1/Ctu1"/>
</dbReference>
<dbReference type="InterPro" id="IPR014729">
    <property type="entry name" value="Rossmann-like_a/b/a_fold"/>
</dbReference>
<dbReference type="InterPro" id="IPR011063">
    <property type="entry name" value="TilS/TtcA_N"/>
</dbReference>
<dbReference type="InterPro" id="IPR035107">
    <property type="entry name" value="tRNA_thiolation_TtcA_Ctu1"/>
</dbReference>
<dbReference type="InterPro" id="IPR020554">
    <property type="entry name" value="UPF0021_CS"/>
</dbReference>
<dbReference type="NCBIfam" id="TIGR00269">
    <property type="entry name" value="TIGR00269 family protein"/>
    <property type="match status" value="1"/>
</dbReference>
<dbReference type="PANTHER" id="PTHR11807">
    <property type="entry name" value="ATPASES OF THE PP SUPERFAMILY-RELATED"/>
    <property type="match status" value="1"/>
</dbReference>
<dbReference type="PANTHER" id="PTHR11807:SF12">
    <property type="entry name" value="CYTOPLASMIC TRNA 2-THIOLATION PROTEIN 1"/>
    <property type="match status" value="1"/>
</dbReference>
<dbReference type="Pfam" id="PF01171">
    <property type="entry name" value="ATP_bind_3"/>
    <property type="match status" value="1"/>
</dbReference>
<dbReference type="Pfam" id="PF16503">
    <property type="entry name" value="zn-ribbon_14"/>
    <property type="match status" value="1"/>
</dbReference>
<dbReference type="PIRSF" id="PIRSF004976">
    <property type="entry name" value="ATPase_YdaO"/>
    <property type="match status" value="1"/>
</dbReference>
<dbReference type="SUPFAM" id="SSF52402">
    <property type="entry name" value="Adenine nucleotide alpha hydrolases-like"/>
    <property type="match status" value="1"/>
</dbReference>
<dbReference type="PROSITE" id="PS01263">
    <property type="entry name" value="UPF0021"/>
    <property type="match status" value="1"/>
</dbReference>
<protein>
    <recommendedName>
        <fullName evidence="1">Cytoplasmic tRNA 2-thiolation protein 1</fullName>
        <ecNumber evidence="1">2.7.7.-</ecNumber>
    </recommendedName>
    <alternativeName>
        <fullName evidence="1">Cytoplasmic tRNA adenylyltransferase 1</fullName>
    </alternativeName>
    <alternativeName>
        <fullName evidence="1">Needs CLA4 to survive protein 6</fullName>
    </alternativeName>
    <alternativeName>
        <fullName evidence="1">Thiolation of uridine in cytoplasmic tRNA protein 1</fullName>
    </alternativeName>
</protein>
<evidence type="ECO:0000255" key="1">
    <source>
        <dbReference type="HAMAP-Rule" id="MF_03053"/>
    </source>
</evidence>
<feature type="chain" id="PRO_0000368271" description="Cytoplasmic tRNA 2-thiolation protein 1">
    <location>
        <begin position="1"/>
        <end position="359"/>
    </location>
</feature>
<proteinExistence type="inferred from homology"/>
<sequence length="359" mass="40086">MSFTAPSDPVNKPTKVKVSQLCELCHSRKALIRRPKNLSKLCKQCFCLVFETEIHNTIVANNLFQRGEKVAVGASGGKDSTVLAHMLKLLNDRYDYGIEIVLLSIDEGIIGYRDDSLATVKRNQQQYGLPLEIFSFKDLYDWTMDEIVSVAGIRNSCTYCGVFRRQSLDRGAAKLGISHVVTGHNADDMAETVLMNILRGDVARLEKSTAIITQSSGSPIKRSKPFKYSYQKEIVLYAHYMKLDYFSTECTYAPEAFRGTAREYMKNLEAVRPSCIIDIIQSGENLALKAKKSNARKRVVKFVDGNRCARCGYLSSNNICKACMLLEGLEKSRAQVAIENDTSADGAALKLRALEKLSF</sequence>
<organism>
    <name type="scientific">Saccharomyces cerevisiae (strain RM11-1a)</name>
    <name type="common">Baker's yeast</name>
    <dbReference type="NCBI Taxonomy" id="285006"/>
    <lineage>
        <taxon>Eukaryota</taxon>
        <taxon>Fungi</taxon>
        <taxon>Dikarya</taxon>
        <taxon>Ascomycota</taxon>
        <taxon>Saccharomycotina</taxon>
        <taxon>Saccharomycetes</taxon>
        <taxon>Saccharomycetales</taxon>
        <taxon>Saccharomycetaceae</taxon>
        <taxon>Saccharomyces</taxon>
    </lineage>
</organism>
<reference key="1">
    <citation type="submission" date="2005-03" db="EMBL/GenBank/DDBJ databases">
        <title>Annotation of the Saccharomyces cerevisiae RM11-1a genome.</title>
        <authorList>
            <consortium name="The Broad Institute Genome Sequencing Platform"/>
            <person name="Birren B.W."/>
            <person name="Lander E.S."/>
            <person name="Galagan J.E."/>
            <person name="Nusbaum C."/>
            <person name="Devon K."/>
            <person name="Cuomo C."/>
            <person name="Jaffe D.B."/>
            <person name="Butler J."/>
            <person name="Alvarez P."/>
            <person name="Gnerre S."/>
            <person name="Grabherr M."/>
            <person name="Kleber M."/>
            <person name="Mauceli E.W."/>
            <person name="Brockman W."/>
            <person name="MacCallum I.A."/>
            <person name="Rounsley S."/>
            <person name="Young S.K."/>
            <person name="LaButti K."/>
            <person name="Pushparaj V."/>
            <person name="DeCaprio D."/>
            <person name="Crawford M."/>
            <person name="Koehrsen M."/>
            <person name="Engels R."/>
            <person name="Montgomery P."/>
            <person name="Pearson M."/>
            <person name="Howarth C."/>
            <person name="Larson L."/>
            <person name="Luoma S."/>
            <person name="White J."/>
            <person name="O'Leary S."/>
            <person name="Kodira C.D."/>
            <person name="Zeng Q."/>
            <person name="Yandava C."/>
            <person name="Alvarado L."/>
            <person name="Pratt S."/>
            <person name="Kruglyak L."/>
        </authorList>
    </citation>
    <scope>NUCLEOTIDE SEQUENCE [LARGE SCALE GENOMIC DNA]</scope>
    <source>
        <strain>RM11-1a</strain>
    </source>
</reference>
<comment type="function">
    <text evidence="1">Plays a central role in 2-thiolation of mcm(5)S(2)U at tRNA wobble positions of tRNA(Lys), tRNA(Glu) and tRNA(Gln). Directly binds tRNAs and probably acts by catalyzing adenylation of tRNAs, an intermediate required for 2-thiolation. It is unclear whether it acts as a sulfurtransferase that transfers sulfur from thiocarboxylated URM1 onto the uridine of tRNAs at wobble position. Prior mcm(5) tRNA modification by the elongator complex is required for 2-thiolation. May also be involved in protein urmylation.</text>
</comment>
<comment type="pathway">
    <text evidence="1">tRNA modification; 5-methoxycarbonylmethyl-2-thiouridine-tRNA biosynthesis.</text>
</comment>
<comment type="subunit">
    <text evidence="1">Interacts with NCS2 and URM1. May act by forming a heterodimer with NCS2. Component of a large molecular weight complex of more than 250 kDa.</text>
</comment>
<comment type="subcellular location">
    <subcellularLocation>
        <location evidence="1">Cytoplasm</location>
    </subcellularLocation>
    <subcellularLocation>
        <location evidence="1">Mitochondrion</location>
    </subcellularLocation>
</comment>
<comment type="similarity">
    <text evidence="1">Belongs to the TtcA family. CTU1/NCS6/ATPBD3 subfamily.</text>
</comment>
<keyword id="KW-0963">Cytoplasm</keyword>
<keyword id="KW-0496">Mitochondrion</keyword>
<keyword id="KW-0694">RNA-binding</keyword>
<keyword id="KW-0808">Transferase</keyword>
<keyword id="KW-0819">tRNA processing</keyword>
<keyword id="KW-0820">tRNA-binding</keyword>
<name>CTU1_YEAS1</name>